<sequence length="613" mass="69421">MLFSFLQETAYAVYGLWASFYPSLYQRPLSSSTRHLDHGPDNRGYWKDGFSIKTDYEVEIPEGKLVEYFFTISEAEIAPDGYLTNVTLVNDQFPGPKIEADWGDTIRVTVYNNLTNSNGTSFHWHGIRQFQTNYLDGVPGVTQCPSKPGDTQVYEFRAMQYGTGWYHSHYSLQYTNGARGPVVIHGPSSANYDIDVEPLLITDWYHADAFSYFHEEITDHAHIPTGTLLNGKGVYECDPTKDSRCVSPPGERHTIQFEPGKKHKLRIISSASLATYKFWIDGHNFTVISTDFVPIEPYVTDILIVGVAQRYEVIVEANATFEHGSNFWIHGTHCDDMIPVPWDTRIGIIQYDAEDNSDPYTPPLETTHPGYGCRDPPPTSLVPIVPRQVGNNVNGFSPADYLEIGLQSWPNISDPDSTIRKWVLANRTQYVDWREPSLRKLVHDNGKTNFTQDEAPIVLDYETGEWVYFVIEGNFTMRDPINDPRPIPRSVHPIHLHGHDFAILAQGDGYFSKDVVPNLDNPARRDTVNLPIGGYVWIAFQINNPGTWLMHCHIAWHASAGLSLQFIEQPSKIKPLVEASGILPEMESRCKDWTEHYNKVNIPLGLVQEDSGI</sequence>
<comment type="function">
    <text evidence="2 6">Oxidoreductase; part of the gene cluster that mediates the biosynthesis of dibenzodioxocinones such as pestalotiollide B, a novel class of inhibitors against cholesterol ester transfer protein (CEPT) (PubMed:31474098). The biosynthesis initiates from condensation of acetate and malonate units catalyzed by the non-reducing PKS pks8/GME11356. Pks8/GME11356 lacks a thioesterase (TE) domain, which is important to the cyclizing of the third ring of atrochrysone carboxylic acid, and the esterase GME11355 might play the role of TE and catalyzes the cyclization reaction of the C ring. The lactamase-like protein GME11357 (or other beta-lactamases in Pestalotiopsis microspora) probably hydrolyzes the thioester bond between the ACP of pks8/GME11356 and the intermediate to release atrochrysone carboxylic acid, which is spontaneously dehydrates to form endocrocin anthrone. Endocrocin anthrone is further converted to emodin via the endocrocin intermediate. Emodin is then oxidized by several enzymes such as the Baeyer-Villiger oxidase GME11358, the oxidoreductase GME11367, the short chain dehydrogenase/reductase GME11373, as well as by other oxidoreductases from the cluster, to modify the A and C rings and open the B ring, and finally yield monodictyphenone. The prenyltransferase GME11375 may catalyze the addition reaction between the C5 side chains and the carbon bone of dibenzodioxocinones. The remaining biochemical reactions to the final product dibenzodioxocinones should be methylation catalyzed by methyltransferase GME11366 and reduction and lactonization reaction catalyzed by a series of oxidordeuctases (Probable).</text>
</comment>
<comment type="pathway">
    <text evidence="6">Secondary metabolite biosynthesis.</text>
</comment>
<comment type="induction">
    <text evidence="3">The expression of the dibenzodioxocinones biosynthesis cluster is positively regulated by the transcription factor dibT.</text>
</comment>
<comment type="similarity">
    <text evidence="5">Belongs to the multicopper oxidase family.</text>
</comment>
<organism>
    <name type="scientific">Pestalotiopsis microspora</name>
    <dbReference type="NCBI Taxonomy" id="85828"/>
    <lineage>
        <taxon>Eukaryota</taxon>
        <taxon>Fungi</taxon>
        <taxon>Dikarya</taxon>
        <taxon>Ascomycota</taxon>
        <taxon>Pezizomycotina</taxon>
        <taxon>Sordariomycetes</taxon>
        <taxon>Xylariomycetidae</taxon>
        <taxon>Amphisphaeriales</taxon>
        <taxon>Sporocadaceae</taxon>
        <taxon>Pestalotiopsis</taxon>
    </lineage>
</organism>
<name>GME65_PESMI</name>
<proteinExistence type="evidence at transcript level"/>
<dbReference type="EC" id="1.-.-.-" evidence="6"/>
<dbReference type="EMBL" id="MK590984">
    <property type="protein sequence ID" value="QED41496.1"/>
    <property type="molecule type" value="mRNA"/>
</dbReference>
<dbReference type="SMR" id="A0A5B8YWJ2"/>
<dbReference type="GO" id="GO:0005507">
    <property type="term" value="F:copper ion binding"/>
    <property type="evidence" value="ECO:0007669"/>
    <property type="project" value="InterPro"/>
</dbReference>
<dbReference type="GO" id="GO:0016491">
    <property type="term" value="F:oxidoreductase activity"/>
    <property type="evidence" value="ECO:0007669"/>
    <property type="project" value="UniProtKB-KW"/>
</dbReference>
<dbReference type="CDD" id="cd13854">
    <property type="entry name" value="CuRO_1_MaLCC_like"/>
    <property type="match status" value="1"/>
</dbReference>
<dbReference type="CDD" id="cd13880">
    <property type="entry name" value="CuRO_2_MaLCC_like"/>
    <property type="match status" value="1"/>
</dbReference>
<dbReference type="CDD" id="cd13901">
    <property type="entry name" value="CuRO_3_MaLCC_like"/>
    <property type="match status" value="1"/>
</dbReference>
<dbReference type="FunFam" id="2.60.40.420:FF:000021">
    <property type="entry name" value="Extracellular dihydrogeodin oxidase/laccase"/>
    <property type="match status" value="1"/>
</dbReference>
<dbReference type="FunFam" id="2.60.40.420:FF:000045">
    <property type="entry name" value="Laccase 2"/>
    <property type="match status" value="1"/>
</dbReference>
<dbReference type="Gene3D" id="2.60.40.420">
    <property type="entry name" value="Cupredoxins - blue copper proteins"/>
    <property type="match status" value="3"/>
</dbReference>
<dbReference type="InterPro" id="IPR011707">
    <property type="entry name" value="Cu-oxidase-like_N"/>
</dbReference>
<dbReference type="InterPro" id="IPR001117">
    <property type="entry name" value="Cu-oxidase_2nd"/>
</dbReference>
<dbReference type="InterPro" id="IPR011706">
    <property type="entry name" value="Cu-oxidase_C"/>
</dbReference>
<dbReference type="InterPro" id="IPR045087">
    <property type="entry name" value="Cu-oxidase_fam"/>
</dbReference>
<dbReference type="InterPro" id="IPR033138">
    <property type="entry name" value="Cu_oxidase_CS"/>
</dbReference>
<dbReference type="InterPro" id="IPR002355">
    <property type="entry name" value="Cu_oxidase_Cu_BS"/>
</dbReference>
<dbReference type="InterPro" id="IPR008972">
    <property type="entry name" value="Cupredoxin"/>
</dbReference>
<dbReference type="PANTHER" id="PTHR11709">
    <property type="entry name" value="MULTI-COPPER OXIDASE"/>
    <property type="match status" value="1"/>
</dbReference>
<dbReference type="PANTHER" id="PTHR11709:SF71">
    <property type="entry name" value="OXIDOREDUCTASE TPCJ"/>
    <property type="match status" value="1"/>
</dbReference>
<dbReference type="Pfam" id="PF00394">
    <property type="entry name" value="Cu-oxidase"/>
    <property type="match status" value="1"/>
</dbReference>
<dbReference type="Pfam" id="PF07731">
    <property type="entry name" value="Cu-oxidase_2"/>
    <property type="match status" value="1"/>
</dbReference>
<dbReference type="Pfam" id="PF07732">
    <property type="entry name" value="Cu-oxidase_3"/>
    <property type="match status" value="1"/>
</dbReference>
<dbReference type="SUPFAM" id="SSF49503">
    <property type="entry name" value="Cupredoxins"/>
    <property type="match status" value="3"/>
</dbReference>
<dbReference type="PROSITE" id="PS00079">
    <property type="entry name" value="MULTICOPPER_OXIDASE1"/>
    <property type="match status" value="1"/>
</dbReference>
<dbReference type="PROSITE" id="PS00080">
    <property type="entry name" value="MULTICOPPER_OXIDASE2"/>
    <property type="match status" value="1"/>
</dbReference>
<feature type="chain" id="PRO_0000456743" description="Oxidoreductase GME11365">
    <location>
        <begin position="1"/>
        <end position="613"/>
    </location>
</feature>
<feature type="domain" description="Plastocyanin-like 1" evidence="1">
    <location>
        <begin position="72"/>
        <end position="188"/>
    </location>
</feature>
<feature type="domain" description="Plastocyanin-like 2" evidence="1">
    <location>
        <begin position="198"/>
        <end position="331"/>
    </location>
</feature>
<feature type="domain" description="Plastocyanin-like 3" evidence="1">
    <location>
        <begin position="431"/>
        <end position="571"/>
    </location>
</feature>
<accession>A0A5B8YWJ2</accession>
<keyword id="KW-0186">Copper</keyword>
<keyword id="KW-0479">Metal-binding</keyword>
<keyword id="KW-0560">Oxidoreductase</keyword>
<keyword id="KW-0677">Repeat</keyword>
<evidence type="ECO:0000255" key="1"/>
<evidence type="ECO:0000269" key="2">
    <source>
    </source>
</evidence>
<evidence type="ECO:0000269" key="3">
    <source>
    </source>
</evidence>
<evidence type="ECO:0000303" key="4">
    <source>
    </source>
</evidence>
<evidence type="ECO:0000305" key="5"/>
<evidence type="ECO:0000305" key="6">
    <source>
    </source>
</evidence>
<protein>
    <recommendedName>
        <fullName evidence="4">Oxidoreductase GME11365</fullName>
        <ecNumber evidence="6">1.-.-.-</ecNumber>
    </recommendedName>
    <alternativeName>
        <fullName evidence="4">Dibenzodioxocinones biosynthesis cluster protein GME11365</fullName>
    </alternativeName>
</protein>
<gene>
    <name evidence="4" type="ORF">GME11365</name>
</gene>
<reference key="1">
    <citation type="journal article" date="2019" name="J. Microbiol. Biotechnol.">
        <title>A gene cluster for the biosynthesis of dibenzodioxocinons in the endophyte Pestalotiopsis microspora, a taxol producer.</title>
        <authorList>
            <person name="Liu Y."/>
            <person name="Chen L."/>
            <person name="Xie Q."/>
            <person name="Yu X."/>
            <person name="Duan A."/>
            <person name="Lin Y."/>
            <person name="Xiang B."/>
            <person name="Hao X."/>
            <person name="Chen W."/>
            <person name="Zhu X."/>
        </authorList>
    </citation>
    <scope>NUCLEOTIDE SEQUENCE [MRNA]</scope>
    <scope>FUNCTION</scope>
    <scope>PATHWAY</scope>
    <source>
        <strain>NK17</strain>
    </source>
</reference>
<reference key="2">
    <citation type="journal article" date="2022" name="Microbiol. Res.">
        <title>Acquiring novel chemicals by overexpression of a transcription factor DibT in the dibenzodioxocinone biosynthetic cluster in Pestalotiopsis microspora.</title>
        <authorList>
            <person name="Liu Y."/>
            <person name="Fu Y."/>
            <person name="Zhou M."/>
            <person name="Hao X."/>
            <person name="Zhang P."/>
            <person name="Zhu X."/>
        </authorList>
    </citation>
    <scope>INDUCTION</scope>
</reference>